<keyword id="KW-0002">3D-structure</keyword>
<keyword id="KW-0413">Isomerase</keyword>
<keyword id="KW-0443">Lipid metabolism</keyword>
<keyword id="KW-1185">Reference proteome</keyword>
<reference key="1">
    <citation type="journal article" date="1998" name="Nature">
        <title>Deciphering the biology of Mycobacterium tuberculosis from the complete genome sequence.</title>
        <authorList>
            <person name="Cole S.T."/>
            <person name="Brosch R."/>
            <person name="Parkhill J."/>
            <person name="Garnier T."/>
            <person name="Churcher C.M."/>
            <person name="Harris D.E."/>
            <person name="Gordon S.V."/>
            <person name="Eiglmeier K."/>
            <person name="Gas S."/>
            <person name="Barry C.E. III"/>
            <person name="Tekaia F."/>
            <person name="Badcock K."/>
            <person name="Basham D."/>
            <person name="Brown D."/>
            <person name="Chillingworth T."/>
            <person name="Connor R."/>
            <person name="Davies R.M."/>
            <person name="Devlin K."/>
            <person name="Feltwell T."/>
            <person name="Gentles S."/>
            <person name="Hamlin N."/>
            <person name="Holroyd S."/>
            <person name="Hornsby T."/>
            <person name="Jagels K."/>
            <person name="Krogh A."/>
            <person name="McLean J."/>
            <person name="Moule S."/>
            <person name="Murphy L.D."/>
            <person name="Oliver S."/>
            <person name="Osborne J."/>
            <person name="Quail M.A."/>
            <person name="Rajandream M.A."/>
            <person name="Rogers J."/>
            <person name="Rutter S."/>
            <person name="Seeger K."/>
            <person name="Skelton S."/>
            <person name="Squares S."/>
            <person name="Squares R."/>
            <person name="Sulston J.E."/>
            <person name="Taylor K."/>
            <person name="Whitehead S."/>
            <person name="Barrell B.G."/>
        </authorList>
    </citation>
    <scope>NUCLEOTIDE SEQUENCE [LARGE SCALE GENOMIC DNA]</scope>
    <source>
        <strain>ATCC 25618 / H37Rv</strain>
    </source>
</reference>
<reference key="2">
    <citation type="journal article" date="2003" name="Acta Crystallogr. D">
        <title>Crystallization and preliminary X-ray diffraction studies of an alpha-methylacyl-CoA racemase from Mycobacterium tuberculosis.</title>
        <authorList>
            <person name="Bhaumik P."/>
            <person name="Kursula P."/>
            <person name="Ratas V."/>
            <person name="Conzelmann E."/>
            <person name="Hiltunen J.K."/>
            <person name="Schmitz W."/>
            <person name="Wierenga R.K."/>
        </authorList>
    </citation>
    <scope>SUBUNIT</scope>
    <scope>CRYSTALLIZATION</scope>
</reference>
<reference key="3">
    <citation type="journal article" date="2010" name="Anal. Biochem.">
        <title>A continuous assay for alpha-methylacyl-coenzyme A racemase using circular dichroism.</title>
        <authorList>
            <person name="Ouazia D."/>
            <person name="Bearne S.L."/>
        </authorList>
    </citation>
    <scope>FUNCTION</scope>
    <scope>CATALYTIC ACTIVITY</scope>
    <scope>BIOPHYSICOCHEMICAL PROPERTIES</scope>
</reference>
<reference evidence="21" key="4">
    <citation type="journal article" date="2011" name="Mol. Cell. Proteomics">
        <title>Proteogenomic analysis of Mycobacterium tuberculosis by high resolution mass spectrometry.</title>
        <authorList>
            <person name="Kelkar D.S."/>
            <person name="Kumar D."/>
            <person name="Kumar P."/>
            <person name="Balakrishnan L."/>
            <person name="Muthusamy B."/>
            <person name="Yadav A.K."/>
            <person name="Shrivastava P."/>
            <person name="Marimuthu A."/>
            <person name="Anand S."/>
            <person name="Sundaram H."/>
            <person name="Kingsbury R."/>
            <person name="Harsha H.C."/>
            <person name="Nair B."/>
            <person name="Prasad T.S."/>
            <person name="Chauhan D.S."/>
            <person name="Katoch K."/>
            <person name="Katoch V.M."/>
            <person name="Kumar P."/>
            <person name="Chaerkady R."/>
            <person name="Ramachandran S."/>
            <person name="Dash D."/>
            <person name="Pandey A."/>
        </authorList>
    </citation>
    <scope>IDENTIFICATION BY MASS SPECTROMETRY [LARGE SCALE ANALYSIS]</scope>
</reference>
<reference key="5">
    <citation type="journal article" date="2015" name="Biochemistry">
        <title>Alpha-methyl acyl CoA racemase provides Mycobacterium tuberculosis catabolic access to cholesterol esters.</title>
        <authorList>
            <person name="Lu R."/>
            <person name="Schmitz W."/>
            <person name="Sampson N.S."/>
        </authorList>
    </citation>
    <scope>FUNCTION</scope>
    <scope>CATALYTIC ACTIVITY</scope>
    <scope>BIOPHYSICOCHEMICAL PROPERTIES</scope>
</reference>
<reference key="6">
    <citation type="journal article" date="2018" name="Bioorg. Chem.">
        <title>Potent dialkyl substrate-product analogue inhibitors and inactivators of alpha-methylacyl-coenzyme A racemase from Mycobacterium tuberculosis by rational design.</title>
        <authorList>
            <person name="Pal M."/>
            <person name="Easton N.M."/>
            <person name="Yaphe H."/>
            <person name="Bearne S.L."/>
        </authorList>
    </citation>
    <scope>ACTIVITY REGULATION</scope>
    <scope>BIOTECHNOLOGY</scope>
</reference>
<reference evidence="16" key="7">
    <citation type="journal article" date="2005" name="J. Biol. Chem.">
        <title>Alpha-methylacyl-CoA racemase from Mycobacterium tuberculosis. Mutational and structural characterization of the active site and the fold.</title>
        <authorList>
            <person name="Savolainen K."/>
            <person name="Bhaumik P."/>
            <person name="Schmitz W."/>
            <person name="Kotti T.J."/>
            <person name="Conzelmann E."/>
            <person name="Wierenga R.K."/>
            <person name="Hiltunen J.K."/>
        </authorList>
    </citation>
    <scope>X-RAY CRYSTALLOGRAPHY (1.79 ANGSTROMS)</scope>
    <scope>FUNCTION</scope>
    <scope>CATALYTIC ACTIVITY</scope>
    <scope>BIOPHYSICOCHEMICAL PROPERTIES</scope>
    <scope>SUBUNIT</scope>
    <scope>MUTAGENESIS OF ARG-52; ILE-56; GLU-82; ARG-91; MET-111; HIS-126; ASP-156; ASP-190; GLU-241; CYS-297 AND HIS-312</scope>
</reference>
<reference evidence="14 15 17 18 19" key="8">
    <citation type="journal article" date="2007" name="J. Mol. Biol.">
        <title>The catalysis of the 1,1-proton transfer by alpha-methyl-acyl-CoA racemase is coupled to a movement of the fatty acyl moiety over a hydrophobic, methionine-rich surface.</title>
        <authorList>
            <person name="Bhaumik P."/>
            <person name="Schmitz W."/>
            <person name="Hassinen A."/>
            <person name="Hiltunen J.K."/>
            <person name="Conzelmann E."/>
            <person name="Wierenga R.K."/>
        </authorList>
    </citation>
    <scope>X-RAY CRYSTALLOGRAPHY (1.60 ANGSTROMS) IN COMPLEXES WITH SUBSTRATES AND INHIBITORS</scope>
    <scope>REACTION MECHANISM</scope>
    <scope>ACTIVE SITE</scope>
</reference>
<reference evidence="20" key="9">
    <citation type="journal article" date="2012" name="J. Phys. Chem. B">
        <title>The enolization chemistry of a thioester-dependent racemase: the 1.4 A crystal structure of a reaction intermediate complex characterized by detailed QM/MM calculations.</title>
        <authorList>
            <person name="Sharma S."/>
            <person name="Bhaumik P."/>
            <person name="Schmitz W."/>
            <person name="Venkatesan R."/>
            <person name="Hiltunen J.K."/>
            <person name="Conzelmann E."/>
            <person name="Juffer A.H."/>
            <person name="Wierenga R.K."/>
        </authorList>
    </citation>
    <scope>X-RAY CRYSTALLOGRAPHY (1.41 ANGSTROMS) IN COMPLEX WITH REACTION INTERMEDIATE ANALOG</scope>
    <scope>REACTION MECHANISM</scope>
    <scope>ACTIVE SITE</scope>
</reference>
<organism>
    <name type="scientific">Mycobacterium tuberculosis (strain ATCC 25618 / H37Rv)</name>
    <dbReference type="NCBI Taxonomy" id="83332"/>
    <lineage>
        <taxon>Bacteria</taxon>
        <taxon>Bacillati</taxon>
        <taxon>Actinomycetota</taxon>
        <taxon>Actinomycetes</taxon>
        <taxon>Mycobacteriales</taxon>
        <taxon>Mycobacteriaceae</taxon>
        <taxon>Mycobacterium</taxon>
        <taxon>Mycobacterium tuberculosis complex</taxon>
    </lineage>
</organism>
<protein>
    <recommendedName>
        <fullName evidence="8">Alpha-methylacyl-CoA racemase</fullName>
        <shortName evidence="8">AMACR</shortName>
        <ecNumber evidence="2 4 6">5.1.99.4</ecNumber>
    </recommendedName>
    <alternativeName>
        <fullName evidence="9">MtMCR</fullName>
    </alternativeName>
</protein>
<name>AMACR_MYCTU</name>
<evidence type="ECO:0000269" key="1">
    <source>
    </source>
</evidence>
<evidence type="ECO:0000269" key="2">
    <source>
    </source>
</evidence>
<evidence type="ECO:0000269" key="3">
    <source>
    </source>
</evidence>
<evidence type="ECO:0000269" key="4">
    <source>
    </source>
</evidence>
<evidence type="ECO:0000269" key="5">
    <source>
    </source>
</evidence>
<evidence type="ECO:0000269" key="6">
    <source>
    </source>
</evidence>
<evidence type="ECO:0000269" key="7">
    <source>
    </source>
</evidence>
<evidence type="ECO:0000303" key="8">
    <source>
    </source>
</evidence>
<evidence type="ECO:0000303" key="9">
    <source>
    </source>
</evidence>
<evidence type="ECO:0000305" key="10"/>
<evidence type="ECO:0000305" key="11">
    <source>
    </source>
</evidence>
<evidence type="ECO:0000305" key="12">
    <source>
    </source>
</evidence>
<evidence type="ECO:0000312" key="13">
    <source>
        <dbReference type="EMBL" id="CCP43898.1"/>
    </source>
</evidence>
<evidence type="ECO:0000312" key="14">
    <source>
        <dbReference type="PDB" id="2GD2"/>
    </source>
</evidence>
<evidence type="ECO:0000312" key="15">
    <source>
        <dbReference type="PDB" id="2GD6"/>
    </source>
</evidence>
<evidence type="ECO:0007744" key="16">
    <source>
        <dbReference type="PDB" id="1X74"/>
    </source>
</evidence>
<evidence type="ECO:0007744" key="17">
    <source>
        <dbReference type="PDB" id="2GCE"/>
    </source>
</evidence>
<evidence type="ECO:0007744" key="18">
    <source>
        <dbReference type="PDB" id="2GCI"/>
    </source>
</evidence>
<evidence type="ECO:0007744" key="19">
    <source>
        <dbReference type="PDB" id="2GD0"/>
    </source>
</evidence>
<evidence type="ECO:0007744" key="20">
    <source>
        <dbReference type="PDB" id="2YIM"/>
    </source>
</evidence>
<evidence type="ECO:0007744" key="21">
    <source>
    </source>
</evidence>
<evidence type="ECO:0007829" key="22">
    <source>
        <dbReference type="PDB" id="2GCE"/>
    </source>
</evidence>
<evidence type="ECO:0007829" key="23">
    <source>
        <dbReference type="PDB" id="2YIM"/>
    </source>
</evidence>
<dbReference type="EC" id="5.1.99.4" evidence="2 4 6"/>
<dbReference type="EMBL" id="AL123456">
    <property type="protein sequence ID" value="CCP43898.1"/>
    <property type="molecule type" value="Genomic_DNA"/>
</dbReference>
<dbReference type="RefSeq" id="NP_215659.1">
    <property type="nucleotide sequence ID" value="NC_000962.3"/>
</dbReference>
<dbReference type="RefSeq" id="WP_003898740.1">
    <property type="nucleotide sequence ID" value="NZ_NVQJ01000021.1"/>
</dbReference>
<dbReference type="PDB" id="1X74">
    <property type="method" value="X-ray"/>
    <property type="resolution" value="1.79 A"/>
    <property type="chains" value="A/B/C/D=1-360"/>
</dbReference>
<dbReference type="PDB" id="2GCE">
    <property type="method" value="X-ray"/>
    <property type="resolution" value="1.85 A"/>
    <property type="chains" value="A/B/C/D=1-360"/>
</dbReference>
<dbReference type="PDB" id="2GCI">
    <property type="method" value="X-ray"/>
    <property type="resolution" value="1.60 A"/>
    <property type="chains" value="A/B/C/D=1-360"/>
</dbReference>
<dbReference type="PDB" id="2GD0">
    <property type="method" value="X-ray"/>
    <property type="resolution" value="1.70 A"/>
    <property type="chains" value="A/B/C/D=1-360"/>
</dbReference>
<dbReference type="PDB" id="2GD2">
    <property type="method" value="X-ray"/>
    <property type="resolution" value="1.70 A"/>
    <property type="chains" value="A/B/C/D=1-360"/>
</dbReference>
<dbReference type="PDB" id="2GD6">
    <property type="method" value="X-ray"/>
    <property type="resolution" value="2.30 A"/>
    <property type="chains" value="A/B/C/D=1-360"/>
</dbReference>
<dbReference type="PDB" id="2YIM">
    <property type="method" value="X-ray"/>
    <property type="resolution" value="1.41 A"/>
    <property type="chains" value="A/B/C/D=1-360"/>
</dbReference>
<dbReference type="PDB" id="8RMW">
    <property type="method" value="X-ray"/>
    <property type="resolution" value="1.65 A"/>
    <property type="chains" value="A/B=1-360"/>
</dbReference>
<dbReference type="PDB" id="8RP3">
    <property type="method" value="X-ray"/>
    <property type="resolution" value="2.45 A"/>
    <property type="chains" value="A/B=1-360"/>
</dbReference>
<dbReference type="PDB" id="8RP4">
    <property type="method" value="X-ray"/>
    <property type="resolution" value="1.64 A"/>
    <property type="chains" value="A/B=1-360"/>
</dbReference>
<dbReference type="PDB" id="8RP5">
    <property type="method" value="X-ray"/>
    <property type="resolution" value="1.85 A"/>
    <property type="chains" value="A/B=1-360"/>
</dbReference>
<dbReference type="PDBsum" id="1X74"/>
<dbReference type="PDBsum" id="2GCE"/>
<dbReference type="PDBsum" id="2GCI"/>
<dbReference type="PDBsum" id="2GD0"/>
<dbReference type="PDBsum" id="2GD2"/>
<dbReference type="PDBsum" id="2GD6"/>
<dbReference type="PDBsum" id="2YIM"/>
<dbReference type="PDBsum" id="8RMW"/>
<dbReference type="PDBsum" id="8RP3"/>
<dbReference type="PDBsum" id="8RP4"/>
<dbReference type="PDBsum" id="8RP5"/>
<dbReference type="SMR" id="O06543"/>
<dbReference type="FunCoup" id="O06543">
    <property type="interactions" value="108"/>
</dbReference>
<dbReference type="STRING" id="83332.Rv1143"/>
<dbReference type="SwissLipids" id="SLP:000001290"/>
<dbReference type="PaxDb" id="83332-Rv1143"/>
<dbReference type="DNASU" id="885067"/>
<dbReference type="GeneID" id="885067"/>
<dbReference type="KEGG" id="mtu:Rv1143"/>
<dbReference type="KEGG" id="mtv:RVBD_1143"/>
<dbReference type="PATRIC" id="fig|83332.111.peg.1277"/>
<dbReference type="TubercuList" id="Rv1143"/>
<dbReference type="eggNOG" id="COG1804">
    <property type="taxonomic scope" value="Bacteria"/>
</dbReference>
<dbReference type="InParanoid" id="O06543"/>
<dbReference type="OrthoDB" id="9797653at2"/>
<dbReference type="PhylomeDB" id="O06543"/>
<dbReference type="BioCyc" id="MetaCyc:G185E-5310-MONOMER"/>
<dbReference type="BRENDA" id="5.1.99.4">
    <property type="organism ID" value="3445"/>
</dbReference>
<dbReference type="EvolutionaryTrace" id="O06543"/>
<dbReference type="Proteomes" id="UP000001584">
    <property type="component" value="Chromosome"/>
</dbReference>
<dbReference type="GO" id="GO:0008111">
    <property type="term" value="F:alpha-methylacyl-CoA racemase activity"/>
    <property type="evidence" value="ECO:0000314"/>
    <property type="project" value="MTBBASE"/>
</dbReference>
<dbReference type="GO" id="GO:0042803">
    <property type="term" value="F:protein homodimerization activity"/>
    <property type="evidence" value="ECO:0000353"/>
    <property type="project" value="MTBBASE"/>
</dbReference>
<dbReference type="GO" id="GO:0006637">
    <property type="term" value="P:acyl-CoA metabolic process"/>
    <property type="evidence" value="ECO:0000314"/>
    <property type="project" value="MTBBASE"/>
</dbReference>
<dbReference type="GO" id="GO:0006629">
    <property type="term" value="P:lipid metabolic process"/>
    <property type="evidence" value="ECO:0007669"/>
    <property type="project" value="UniProtKB-KW"/>
</dbReference>
<dbReference type="FunFam" id="3.30.1540.10:FF:000004">
    <property type="entry name" value="Probable alpha-methylacyl-CoA racemase mcr"/>
    <property type="match status" value="1"/>
</dbReference>
<dbReference type="FunFam" id="3.40.50.10540:FF:000004">
    <property type="entry name" value="Probable alpha-methylacyl-CoA racemase mcr"/>
    <property type="match status" value="1"/>
</dbReference>
<dbReference type="Gene3D" id="3.30.60.110">
    <property type="match status" value="1"/>
</dbReference>
<dbReference type="Gene3D" id="3.40.50.10540">
    <property type="entry name" value="Crotonobetainyl-coa:carnitine coa-transferase, domain 1"/>
    <property type="match status" value="1"/>
</dbReference>
<dbReference type="Gene3D" id="3.30.1540.10">
    <property type="entry name" value="formyl-coa transferase, domain 3"/>
    <property type="match status" value="1"/>
</dbReference>
<dbReference type="InterPro" id="IPR050509">
    <property type="entry name" value="CoA-transferase_III"/>
</dbReference>
<dbReference type="InterPro" id="IPR003673">
    <property type="entry name" value="CoA-Trfase_fam_III"/>
</dbReference>
<dbReference type="InterPro" id="IPR044855">
    <property type="entry name" value="CoA-Trfase_III_dom3_sf"/>
</dbReference>
<dbReference type="InterPro" id="IPR023606">
    <property type="entry name" value="CoA-Trfase_III_dom_1_sf"/>
</dbReference>
<dbReference type="PANTHER" id="PTHR48228:SF5">
    <property type="entry name" value="ALPHA-METHYLACYL-COA RACEMASE"/>
    <property type="match status" value="1"/>
</dbReference>
<dbReference type="PANTHER" id="PTHR48228">
    <property type="entry name" value="SUCCINYL-COA--D-CITRAMALATE COA-TRANSFERASE"/>
    <property type="match status" value="1"/>
</dbReference>
<dbReference type="Pfam" id="PF02515">
    <property type="entry name" value="CoA_transf_3"/>
    <property type="match status" value="1"/>
</dbReference>
<dbReference type="SUPFAM" id="SSF89796">
    <property type="entry name" value="CoA-transferase family III (CaiB/BaiF)"/>
    <property type="match status" value="1"/>
</dbReference>
<accession>O06543</accession>
<accession>I6XAR5</accession>
<sequence>MAGPLSGLRVVELAGIGPGPHAAMILGDLGADVVRIDRPSSVDGISRDAMLRNRRIVTADLKSDQGLELALKLIAKADVLIEGYRPGVTERLGLGPEECAKVNDRLIYARMTGWGQTGPRSQQAGHDINYISLNGILHAIGRGDERPVPPLNLVGDFGGGSMFLLVGILAALWERQSSGKGQVVDAAMVDGSSVLIQMMWAMRATGMWTDTRGANMLDGGAPYYDTYECADGRYVAVGAIEPQFYAAMLAGLGLDAAELPPQNDRARWPELRALLTEAFASHDRDHWGAVFANSDACVTPVLAFGEVHNEPHIIERNTFYEANGGWQPMPAPRFSRTASSQPRPPAATIDIEAVLTDWDG</sequence>
<feature type="chain" id="PRO_0000449922" description="Alpha-methylacyl-CoA racemase">
    <location>
        <begin position="1"/>
        <end position="360"/>
    </location>
</feature>
<feature type="active site" description="Proton acceptor" evidence="11 12">
    <location>
        <position position="126"/>
    </location>
</feature>
<feature type="active site" description="Proton donor" evidence="11 12">
    <location>
        <position position="156"/>
    </location>
</feature>
<feature type="binding site" evidence="3 5">
    <location>
        <position position="38"/>
    </location>
    <ligand>
        <name>substrate</name>
    </ligand>
</feature>
<feature type="binding site" evidence="3 5">
    <location>
        <begin position="59"/>
        <end position="62"/>
    </location>
    <ligand>
        <name>substrate</name>
    </ligand>
</feature>
<feature type="binding site" evidence="3 5">
    <location>
        <begin position="83"/>
        <end position="85"/>
    </location>
    <ligand>
        <name>substrate</name>
    </ligand>
</feature>
<feature type="binding site" evidence="3 5">
    <location>
        <position position="91"/>
    </location>
    <ligand>
        <name>substrate</name>
    </ligand>
</feature>
<feature type="binding site" evidence="3 5">
    <location>
        <begin position="125"/>
        <end position="130"/>
    </location>
    <ligand>
        <name>substrate</name>
    </ligand>
</feature>
<feature type="mutagenesis site" description="15.7% of wild-type activity." evidence="2">
    <original>R</original>
    <variation>A</variation>
    <location>
        <position position="52"/>
    </location>
</feature>
<feature type="mutagenesis site" description="28.8% of wild-type activity." evidence="2">
    <original>I</original>
    <variation>P</variation>
    <location>
        <position position="56"/>
    </location>
</feature>
<feature type="mutagenesis site" description="12.5% of wild-type activity." evidence="2">
    <original>E</original>
    <variation>A</variation>
    <location>
        <position position="82"/>
    </location>
</feature>
<feature type="mutagenesis site" description="19.9% of wild-type activity." evidence="2">
    <original>R</original>
    <variation>A</variation>
    <location>
        <position position="91"/>
    </location>
</feature>
<feature type="mutagenesis site" description="5.2% of wild-type activity." evidence="2">
    <original>M</original>
    <variation>P</variation>
    <location>
        <position position="111"/>
    </location>
</feature>
<feature type="mutagenesis site" description="4.5% of wild-type activity." evidence="2">
    <original>H</original>
    <variation>A</variation>
    <location>
        <position position="126"/>
    </location>
</feature>
<feature type="mutagenesis site" description="17.6 of wild-type activity." evidence="2">
    <original>D</original>
    <variation>A</variation>
    <location>
        <position position="156"/>
    </location>
</feature>
<feature type="mutagenesis site" description="3.3% of wild-type activity." evidence="2">
    <original>D</original>
    <variation>A</variation>
    <location>
        <position position="190"/>
    </location>
</feature>
<feature type="mutagenesis site" description="2.1% of wild-type activity." evidence="2">
    <original>E</original>
    <variation>A</variation>
    <location>
        <position position="241"/>
    </location>
</feature>
<feature type="mutagenesis site" description="6.2% of wild-type activity." evidence="2">
    <original>C</original>
    <variation>A</variation>
    <location>
        <position position="297"/>
    </location>
</feature>
<feature type="mutagenesis site" description="10.1% of wild-type activity." evidence="2">
    <original>H</original>
    <variation>A</variation>
    <location>
        <position position="312"/>
    </location>
</feature>
<feature type="turn" evidence="23">
    <location>
        <begin position="4"/>
        <end position="7"/>
    </location>
</feature>
<feature type="strand" evidence="23">
    <location>
        <begin position="9"/>
        <end position="13"/>
    </location>
</feature>
<feature type="helix" evidence="23">
    <location>
        <begin position="18"/>
        <end position="28"/>
    </location>
</feature>
<feature type="strand" evidence="23">
    <location>
        <begin position="32"/>
        <end position="37"/>
    </location>
</feature>
<feature type="helix" evidence="23">
    <location>
        <begin position="49"/>
        <end position="51"/>
    </location>
</feature>
<feature type="strand" evidence="23">
    <location>
        <begin position="55"/>
        <end position="58"/>
    </location>
</feature>
<feature type="helix" evidence="23">
    <location>
        <begin position="64"/>
        <end position="74"/>
    </location>
</feature>
<feature type="strand" evidence="23">
    <location>
        <begin position="78"/>
        <end position="82"/>
    </location>
</feature>
<feature type="helix" evidence="23">
    <location>
        <begin position="88"/>
        <end position="92"/>
    </location>
</feature>
<feature type="helix" evidence="23">
    <location>
        <begin position="96"/>
        <end position="102"/>
    </location>
</feature>
<feature type="strand" evidence="23">
    <location>
        <begin position="107"/>
        <end position="114"/>
    </location>
</feature>
<feature type="strand" evidence="23">
    <location>
        <begin position="116"/>
        <end position="118"/>
    </location>
</feature>
<feature type="turn" evidence="23">
    <location>
        <begin position="119"/>
        <end position="122"/>
    </location>
</feature>
<feature type="helix" evidence="23">
    <location>
        <begin position="127"/>
        <end position="132"/>
    </location>
</feature>
<feature type="turn" evidence="22">
    <location>
        <begin position="133"/>
        <end position="136"/>
    </location>
</feature>
<feature type="helix" evidence="23">
    <location>
        <begin position="137"/>
        <end position="139"/>
    </location>
</feature>
<feature type="helix" evidence="23">
    <location>
        <begin position="153"/>
        <end position="160"/>
    </location>
</feature>
<feature type="helix" evidence="23">
    <location>
        <begin position="161"/>
        <end position="178"/>
    </location>
</feature>
<feature type="strand" evidence="23">
    <location>
        <begin position="182"/>
        <end position="187"/>
    </location>
</feature>
<feature type="helix" evidence="23">
    <location>
        <begin position="188"/>
        <end position="195"/>
    </location>
</feature>
<feature type="helix" evidence="23">
    <location>
        <begin position="197"/>
        <end position="204"/>
    </location>
</feature>
<feature type="turn" evidence="23">
    <location>
        <begin position="216"/>
        <end position="219"/>
    </location>
</feature>
<feature type="strand" evidence="23">
    <location>
        <begin position="224"/>
        <end position="228"/>
    </location>
</feature>
<feature type="strand" evidence="23">
    <location>
        <begin position="234"/>
        <end position="238"/>
    </location>
</feature>
<feature type="helix" evidence="23">
    <location>
        <begin position="242"/>
        <end position="252"/>
    </location>
</feature>
<feature type="helix" evidence="23">
    <location>
        <begin position="256"/>
        <end position="258"/>
    </location>
</feature>
<feature type="helix" evidence="23">
    <location>
        <begin position="265"/>
        <end position="267"/>
    </location>
</feature>
<feature type="helix" evidence="23">
    <location>
        <begin position="268"/>
        <end position="280"/>
    </location>
</feature>
<feature type="helix" evidence="23">
    <location>
        <begin position="284"/>
        <end position="290"/>
    </location>
</feature>
<feature type="strand" evidence="23">
    <location>
        <begin position="292"/>
        <end position="296"/>
    </location>
</feature>
<feature type="strand" evidence="23">
    <location>
        <begin position="298"/>
        <end position="300"/>
    </location>
</feature>
<feature type="helix" evidence="23">
    <location>
        <begin position="304"/>
        <end position="309"/>
    </location>
</feature>
<feature type="helix" evidence="23">
    <location>
        <begin position="311"/>
        <end position="315"/>
    </location>
</feature>
<feature type="strand" evidence="23">
    <location>
        <begin position="319"/>
        <end position="322"/>
    </location>
</feature>
<feature type="strand" evidence="23">
    <location>
        <begin position="325"/>
        <end position="328"/>
    </location>
</feature>
<feature type="strand" evidence="23">
    <location>
        <begin position="331"/>
        <end position="337"/>
    </location>
</feature>
<feature type="helix" evidence="23">
    <location>
        <begin position="351"/>
        <end position="358"/>
    </location>
</feature>
<gene>
    <name evidence="8" type="primary">mcr</name>
    <name evidence="13" type="ordered locus">Rv1143</name>
</gene>
<comment type="function">
    <text evidence="2 4 6">Catalyzes the epimerization of (2R)- and (2S)-methylacyl-coenzyme A (CoA) thioesters (PubMed:15632186, PubMed:19854148, PubMed:26348625). Accepts as substrates a wide range of alpha-methylacyl-CoAs, including (2R)-2-methylmyristoyl-CoA and (2S)-2-methylmyristoyl-CoA, (2R)-pristanoyl-CoA and (2S)-pristanoyl-CoA, and the cholesterol esters (25R)-3-oxo-cholest-4-en-26-oyl-CoA and (25S)-3-oxo-cholest-4-en-26-oyl-CoA (PubMed:15632186, PubMed:26348625). Can also catalyze the interconversion of the non-physiologic substrates (2R)-ibuprofenoyl-CoA and (2S)-ibuprofenoyl-CoA, which are potential competitive inhibitors of the enzyme (PubMed:19854148).</text>
</comment>
<comment type="catalytic activity">
    <reaction evidence="2">
        <text>a (2S)-2-methylacyl-CoA = a (2R)-2-methylacyl-CoA</text>
        <dbReference type="Rhea" id="RHEA:12657"/>
        <dbReference type="ChEBI" id="CHEBI:57313"/>
        <dbReference type="ChEBI" id="CHEBI:57314"/>
        <dbReference type="EC" id="5.1.99.4"/>
    </reaction>
</comment>
<comment type="catalytic activity">
    <reaction evidence="2">
        <text>(2S)-2-methyltetradecanoyl-CoA = (2R)-2-methyltetradecanoyl-CoA</text>
        <dbReference type="Rhea" id="RHEA:46724"/>
        <dbReference type="ChEBI" id="CHEBI:86520"/>
        <dbReference type="ChEBI" id="CHEBI:86521"/>
    </reaction>
</comment>
<comment type="catalytic activity">
    <reaction evidence="2">
        <text>(2R)-pristanoyl-CoA = (2S)-pristanoyl-CoA</text>
        <dbReference type="Rhea" id="RHEA:40447"/>
        <dbReference type="ChEBI" id="CHEBI:77099"/>
        <dbReference type="ChEBI" id="CHEBI:77275"/>
    </reaction>
</comment>
<comment type="catalytic activity">
    <reaction evidence="6">
        <text>(25S)-3-oxocholest-4-en-26-oyl-CoA = (25R)-3-oxocholest-4-en-26-oyl-CoA</text>
        <dbReference type="Rhea" id="RHEA:63172"/>
        <dbReference type="ChEBI" id="CHEBI:83819"/>
        <dbReference type="ChEBI" id="CHEBI:146202"/>
    </reaction>
</comment>
<comment type="catalytic activity">
    <reaction evidence="4">
        <text>(2S)-ibuprofenoyl-CoA = (2R)-ibuprofenoyl-CoA</text>
        <dbReference type="Rhea" id="RHEA:63176"/>
        <dbReference type="ChEBI" id="CHEBI:146203"/>
        <dbReference type="ChEBI" id="CHEBI:146204"/>
    </reaction>
</comment>
<comment type="activity regulation">
    <text evidence="7">Inactivated by N,N-dialkylcarbamoyl-CoA substrate-product analogs.</text>
</comment>
<comment type="biophysicochemical properties">
    <kinetics>
        <KM evidence="2">41 uM for (R)-pristanoyl-CoA</KM>
        <KM evidence="6">6.5 uM for (25R)-3-oxo-cholest-4-en-26-oyl-CoA</KM>
        <KM evidence="4">86 uM for (2S)-ibuprofenoyl-CoA</KM>
        <KM evidence="4">48 uM for (2R)-ibuprofenoyl-CoA</KM>
        <Vmax evidence="2">214.0 umol/min/mg enzyme with (R)-pristanoyl-CoA as substrate</Vmax>
        <text evidence="4 6">kcat is 3.7 sec(-1) with (25R)-3-oxo-cholest-4-en-26-oyl-CoA as substrate (PubMed:26348625). kcat is 450 sec(-1) with (2S)-ibuprofenoyl-CoA as substrate (PubMed:19854148). kcat is 291 sec(-1) with (2R)-ibuprofenoyl-CoA as substrate (PubMed:19854148).</text>
    </kinetics>
</comment>
<comment type="subunit">
    <text evidence="1 2">Homodimer.</text>
</comment>
<comment type="biotechnology">
    <text evidence="7">Development of gem-disubstituted substrate-product analogs as inhibitors of racemases and epimerases is elaborated using alpha-methylacyl-CoA racemase from Mycobacterium tuberculosis as a model enzyme. These non-physiologic substrates could be used as a therapeutic agent to inhibit human AMACR, which is overexpressed in prostate cancer.</text>
</comment>
<comment type="miscellaneous">
    <text evidence="5">Interconversion is achieved via a planar enolate intermediate.</text>
</comment>
<comment type="similarity">
    <text evidence="10">Belongs to the CoA-transferase III family.</text>
</comment>
<proteinExistence type="evidence at protein level"/>